<evidence type="ECO:0000255" key="1">
    <source>
        <dbReference type="HAMAP-Rule" id="MF_01114"/>
    </source>
</evidence>
<protein>
    <recommendedName>
        <fullName evidence="1">Regulatory protein RecX</fullName>
    </recommendedName>
</protein>
<name>RECX_XANOP</name>
<gene>
    <name evidence="1" type="primary">recX</name>
    <name type="ordered locus">PXO_00148</name>
</gene>
<feature type="chain" id="PRO_1000137206" description="Regulatory protein RecX">
    <location>
        <begin position="1"/>
        <end position="162"/>
    </location>
</feature>
<keyword id="KW-0963">Cytoplasm</keyword>
<accession>B2SUC9</accession>
<reference key="1">
    <citation type="journal article" date="2008" name="BMC Genomics">
        <title>Genome sequence and rapid evolution of the rice pathogen Xanthomonas oryzae pv. oryzae PXO99A.</title>
        <authorList>
            <person name="Salzberg S.L."/>
            <person name="Sommer D.D."/>
            <person name="Schatz M.C."/>
            <person name="Phillippy A.M."/>
            <person name="Rabinowicz P.D."/>
            <person name="Tsuge S."/>
            <person name="Furutani A."/>
            <person name="Ochiai H."/>
            <person name="Delcher A.L."/>
            <person name="Kelley D."/>
            <person name="Madupu R."/>
            <person name="Puiu D."/>
            <person name="Radune D."/>
            <person name="Shumway M."/>
            <person name="Trapnell C."/>
            <person name="Aparna G."/>
            <person name="Jha G."/>
            <person name="Pandey A."/>
            <person name="Patil P.B."/>
            <person name="Ishihara H."/>
            <person name="Meyer D.F."/>
            <person name="Szurek B."/>
            <person name="Verdier V."/>
            <person name="Koebnik R."/>
            <person name="Dow J.M."/>
            <person name="Ryan R.P."/>
            <person name="Hirata H."/>
            <person name="Tsuyumu S."/>
            <person name="Won Lee S."/>
            <person name="Seo Y.-S."/>
            <person name="Sriariyanum M."/>
            <person name="Ronald P.C."/>
            <person name="Sonti R.V."/>
            <person name="Van Sluys M.-A."/>
            <person name="Leach J.E."/>
            <person name="White F.F."/>
            <person name="Bogdanove A.J."/>
        </authorList>
    </citation>
    <scope>NUCLEOTIDE SEQUENCE [LARGE SCALE GENOMIC DNA]</scope>
    <source>
        <strain>PXO99A</strain>
    </source>
</reference>
<comment type="function">
    <text evidence="1">Modulates RecA activity.</text>
</comment>
<comment type="subcellular location">
    <subcellularLocation>
        <location evidence="1">Cytoplasm</location>
    </subcellularLocation>
</comment>
<comment type="similarity">
    <text evidence="1">Belongs to the RecX family.</text>
</comment>
<sequence length="162" mass="18164">MNEQEPAPKRGRRFKEQTPVQRALGLLVRREHSRKELNRKLLARGIEPDAAQAAVDRLTGEGWQDDARFAAAVVRNRAGSGYGPLHIRAELGTHGLDSEAISAAMATFQGDWTENARDLIHRRFGEQGPIDLPQRRKAADWLARRGFDGNSIRAATRFDLED</sequence>
<organism>
    <name type="scientific">Xanthomonas oryzae pv. oryzae (strain PXO99A)</name>
    <dbReference type="NCBI Taxonomy" id="360094"/>
    <lineage>
        <taxon>Bacteria</taxon>
        <taxon>Pseudomonadati</taxon>
        <taxon>Pseudomonadota</taxon>
        <taxon>Gammaproteobacteria</taxon>
        <taxon>Lysobacterales</taxon>
        <taxon>Lysobacteraceae</taxon>
        <taxon>Xanthomonas</taxon>
    </lineage>
</organism>
<dbReference type="EMBL" id="CP000967">
    <property type="protein sequence ID" value="ACD58319.1"/>
    <property type="molecule type" value="Genomic_DNA"/>
</dbReference>
<dbReference type="RefSeq" id="WP_012444556.1">
    <property type="nucleotide sequence ID" value="NC_010717.2"/>
</dbReference>
<dbReference type="SMR" id="B2SUC9"/>
<dbReference type="KEGG" id="xop:PXO_00148"/>
<dbReference type="eggNOG" id="COG2137">
    <property type="taxonomic scope" value="Bacteria"/>
</dbReference>
<dbReference type="HOGENOM" id="CLU_066607_3_2_6"/>
<dbReference type="Proteomes" id="UP000001740">
    <property type="component" value="Chromosome"/>
</dbReference>
<dbReference type="GO" id="GO:0005737">
    <property type="term" value="C:cytoplasm"/>
    <property type="evidence" value="ECO:0007669"/>
    <property type="project" value="UniProtKB-SubCell"/>
</dbReference>
<dbReference type="GO" id="GO:0006282">
    <property type="term" value="P:regulation of DNA repair"/>
    <property type="evidence" value="ECO:0007669"/>
    <property type="project" value="UniProtKB-UniRule"/>
</dbReference>
<dbReference type="Gene3D" id="1.10.10.10">
    <property type="entry name" value="Winged helix-like DNA-binding domain superfamily/Winged helix DNA-binding domain"/>
    <property type="match status" value="3"/>
</dbReference>
<dbReference type="HAMAP" id="MF_01114">
    <property type="entry name" value="RecX"/>
    <property type="match status" value="1"/>
</dbReference>
<dbReference type="InterPro" id="IPR053926">
    <property type="entry name" value="RecX_HTH_1st"/>
</dbReference>
<dbReference type="InterPro" id="IPR053924">
    <property type="entry name" value="RecX_HTH_2nd"/>
</dbReference>
<dbReference type="InterPro" id="IPR053925">
    <property type="entry name" value="RecX_HTH_3rd"/>
</dbReference>
<dbReference type="InterPro" id="IPR003783">
    <property type="entry name" value="Regulatory_RecX"/>
</dbReference>
<dbReference type="InterPro" id="IPR036388">
    <property type="entry name" value="WH-like_DNA-bd_sf"/>
</dbReference>
<dbReference type="NCBIfam" id="NF001054">
    <property type="entry name" value="PRK00117.2-1"/>
    <property type="match status" value="1"/>
</dbReference>
<dbReference type="PANTHER" id="PTHR33602">
    <property type="entry name" value="REGULATORY PROTEIN RECX FAMILY PROTEIN"/>
    <property type="match status" value="1"/>
</dbReference>
<dbReference type="PANTHER" id="PTHR33602:SF1">
    <property type="entry name" value="REGULATORY PROTEIN RECX FAMILY PROTEIN"/>
    <property type="match status" value="1"/>
</dbReference>
<dbReference type="Pfam" id="PF21982">
    <property type="entry name" value="RecX_HTH1"/>
    <property type="match status" value="1"/>
</dbReference>
<dbReference type="Pfam" id="PF02631">
    <property type="entry name" value="RecX_HTH2"/>
    <property type="match status" value="1"/>
</dbReference>
<dbReference type="Pfam" id="PF21981">
    <property type="entry name" value="RecX_HTH3"/>
    <property type="match status" value="1"/>
</dbReference>
<proteinExistence type="inferred from homology"/>